<keyword id="KW-0010">Activator</keyword>
<keyword id="KW-0238">DNA-binding</keyword>
<keyword id="KW-1185">Reference proteome</keyword>
<keyword id="KW-0678">Repressor</keyword>
<keyword id="KW-0804">Transcription</keyword>
<keyword id="KW-0805">Transcription regulation</keyword>
<accession>B2U2E2</accession>
<organism>
    <name type="scientific">Shigella boydii serotype 18 (strain CDC 3083-94 / BS512)</name>
    <dbReference type="NCBI Taxonomy" id="344609"/>
    <lineage>
        <taxon>Bacteria</taxon>
        <taxon>Pseudomonadati</taxon>
        <taxon>Pseudomonadota</taxon>
        <taxon>Gammaproteobacteria</taxon>
        <taxon>Enterobacterales</taxon>
        <taxon>Enterobacteriaceae</taxon>
        <taxon>Shigella</taxon>
    </lineage>
</organism>
<reference key="1">
    <citation type="submission" date="2008-05" db="EMBL/GenBank/DDBJ databases">
        <title>Complete sequence of Shigella boydii serotype 18 strain BS512.</title>
        <authorList>
            <person name="Rasko D.A."/>
            <person name="Rosovitz M."/>
            <person name="Maurelli A.T."/>
            <person name="Myers G."/>
            <person name="Seshadri R."/>
            <person name="Cer R."/>
            <person name="Jiang L."/>
            <person name="Ravel J."/>
            <person name="Sebastian Y."/>
        </authorList>
    </citation>
    <scope>NUCLEOTIDE SEQUENCE [LARGE SCALE GENOMIC DNA]</scope>
    <source>
        <strain>CDC 3083-94 / BS512</strain>
    </source>
</reference>
<protein>
    <recommendedName>
        <fullName evidence="1">Transcriptional regulator SlyA</fullName>
    </recommendedName>
</protein>
<sequence>MESPLGSDLARLVRIWRALIDHRLKPLELTQTHWVTLHNIHQLPPDQSQIQLAKAIGIEQPSLVRTLDQLEEKGLISRQTCASDRRAKRIKLTEKAEPLISEMEAVINKTCAEILHGISAEELEQLITLIAKLEHNIIELQAKG</sequence>
<gene>
    <name evidence="1" type="primary">slyA</name>
    <name type="ordered locus">SbBS512_E1834</name>
</gene>
<proteinExistence type="inferred from homology"/>
<evidence type="ECO:0000255" key="1">
    <source>
        <dbReference type="HAMAP-Rule" id="MF_01819"/>
    </source>
</evidence>
<dbReference type="EMBL" id="CP001063">
    <property type="protein sequence ID" value="ACD07001.1"/>
    <property type="molecule type" value="Genomic_DNA"/>
</dbReference>
<dbReference type="RefSeq" id="WP_012421302.1">
    <property type="nucleotide sequence ID" value="NC_010658.1"/>
</dbReference>
<dbReference type="SMR" id="B2U2E2"/>
<dbReference type="STRING" id="344609.SbBS512_E1834"/>
<dbReference type="KEGG" id="sbc:SbBS512_E1834"/>
<dbReference type="HOGENOM" id="CLU_083287_18_2_6"/>
<dbReference type="Proteomes" id="UP000001030">
    <property type="component" value="Chromosome"/>
</dbReference>
<dbReference type="GO" id="GO:0003677">
    <property type="term" value="F:DNA binding"/>
    <property type="evidence" value="ECO:0007669"/>
    <property type="project" value="UniProtKB-UniRule"/>
</dbReference>
<dbReference type="GO" id="GO:0003700">
    <property type="term" value="F:DNA-binding transcription factor activity"/>
    <property type="evidence" value="ECO:0007669"/>
    <property type="project" value="UniProtKB-UniRule"/>
</dbReference>
<dbReference type="GO" id="GO:0006950">
    <property type="term" value="P:response to stress"/>
    <property type="evidence" value="ECO:0007669"/>
    <property type="project" value="TreeGrafter"/>
</dbReference>
<dbReference type="FunFam" id="1.10.10.10:FF:000261">
    <property type="entry name" value="Transcriptional regulator SlyA"/>
    <property type="match status" value="1"/>
</dbReference>
<dbReference type="Gene3D" id="1.10.10.10">
    <property type="entry name" value="Winged helix-like DNA-binding domain superfamily/Winged helix DNA-binding domain"/>
    <property type="match status" value="1"/>
</dbReference>
<dbReference type="HAMAP" id="MF_01819">
    <property type="entry name" value="HTH_type_SlyA"/>
    <property type="match status" value="1"/>
</dbReference>
<dbReference type="InterPro" id="IPR000835">
    <property type="entry name" value="HTH_MarR-typ"/>
</dbReference>
<dbReference type="InterPro" id="IPR039422">
    <property type="entry name" value="MarR/SlyA-like"/>
</dbReference>
<dbReference type="InterPro" id="IPR023187">
    <property type="entry name" value="Tscrpt_reg_MarR-type_CS"/>
</dbReference>
<dbReference type="InterPro" id="IPR023071">
    <property type="entry name" value="Tscrpt_reg_SlyA"/>
</dbReference>
<dbReference type="InterPro" id="IPR036388">
    <property type="entry name" value="WH-like_DNA-bd_sf"/>
</dbReference>
<dbReference type="InterPro" id="IPR036390">
    <property type="entry name" value="WH_DNA-bd_sf"/>
</dbReference>
<dbReference type="NCBIfam" id="NF002926">
    <property type="entry name" value="PRK03573.1"/>
    <property type="match status" value="1"/>
</dbReference>
<dbReference type="PANTHER" id="PTHR33164:SF64">
    <property type="entry name" value="TRANSCRIPTIONAL REGULATOR SLYA"/>
    <property type="match status" value="1"/>
</dbReference>
<dbReference type="PANTHER" id="PTHR33164">
    <property type="entry name" value="TRANSCRIPTIONAL REGULATOR, MARR FAMILY"/>
    <property type="match status" value="1"/>
</dbReference>
<dbReference type="Pfam" id="PF01047">
    <property type="entry name" value="MarR"/>
    <property type="match status" value="1"/>
</dbReference>
<dbReference type="PRINTS" id="PR00598">
    <property type="entry name" value="HTHMARR"/>
</dbReference>
<dbReference type="SMART" id="SM00347">
    <property type="entry name" value="HTH_MARR"/>
    <property type="match status" value="1"/>
</dbReference>
<dbReference type="SUPFAM" id="SSF46785">
    <property type="entry name" value="Winged helix' DNA-binding domain"/>
    <property type="match status" value="1"/>
</dbReference>
<dbReference type="PROSITE" id="PS01117">
    <property type="entry name" value="HTH_MARR_1"/>
    <property type="match status" value="1"/>
</dbReference>
<dbReference type="PROSITE" id="PS50995">
    <property type="entry name" value="HTH_MARR_2"/>
    <property type="match status" value="1"/>
</dbReference>
<name>SLYA_SHIB3</name>
<feature type="chain" id="PRO_1000188018" description="Transcriptional regulator SlyA">
    <location>
        <begin position="1"/>
        <end position="144"/>
    </location>
</feature>
<feature type="domain" description="HTH marR-type" evidence="1">
    <location>
        <begin position="2"/>
        <end position="135"/>
    </location>
</feature>
<feature type="DNA-binding region" description="H-T-H motif" evidence="1">
    <location>
        <begin position="49"/>
        <end position="72"/>
    </location>
</feature>
<comment type="function">
    <text evidence="1">Transcription regulator that can specifically activate or repress expression of target genes.</text>
</comment>
<comment type="subunit">
    <text evidence="1">Homodimer.</text>
</comment>
<comment type="similarity">
    <text evidence="1">Belongs to the SlyA family.</text>
</comment>